<reference key="1">
    <citation type="journal article" date="1997" name="J. Biol. Chem.">
        <title>Trematode myoglobins, functional molecules with a distal tyrosine.</title>
        <authorList>
            <person name="Rashid A.R."/>
            <person name="van Hauwaert M.-L."/>
            <person name="Haque M."/>
            <person name="Siddiqi A.H."/>
            <person name="Lasters I."/>
            <person name="de Maeyer M."/>
            <person name="Griffon N."/>
            <person name="Marden M.C."/>
            <person name="Dewilde S."/>
            <person name="Clauwaert J."/>
            <person name="Vinogradov S.N."/>
            <person name="Moens L."/>
        </authorList>
    </citation>
    <scope>PROTEIN SEQUENCE OF 2-148</scope>
    <scope>MASS SPECTROMETRY</scope>
</reference>
<reference key="2">
    <citation type="journal article" date="1997" name="J. Biol. Chem.">
        <title>Solution of 1H NMR structure of the heme cavity in the oxygen-avid myoglobin from the trematode Paramphistomum epiclitum.</title>
        <authorList>
            <person name="Zhang W."/>
            <person name="Rashid K.A."/>
            <person name="Haque M."/>
            <person name="Siddiqi A.H."/>
            <person name="Vinogradov S.N."/>
            <person name="Moens L."/>
            <person name="la Mar G.N."/>
        </authorList>
    </citation>
    <scope>STRUCTURE BY NMR OF THE HEME POCKET RESIDUES</scope>
</reference>
<reference key="3">
    <citation type="journal article" date="2001" name="J. Mol. Biol.">
        <title>Very high resolution structure of a trematode hemoglobin displaying a TyrB10-TyrE7 heme distal residue pair and high oxygen affinity.</title>
        <authorList>
            <person name="Pesce A."/>
            <person name="Dewilde S."/>
            <person name="Kiger L."/>
            <person name="Milani M."/>
            <person name="Ascenzi P."/>
            <person name="Marden M.C."/>
            <person name="Van Hauwaert M.L."/>
            <person name="Vanfleteren J."/>
            <person name="Moens L."/>
            <person name="Bolognesi M."/>
        </authorList>
    </citation>
    <scope>X-RAY CRYSTALLOGRAPHY (1.17 ANGSTROMS) IN COMPLEX WITH HEME</scope>
</reference>
<dbReference type="PIR" id="A58345">
    <property type="entry name" value="A58345"/>
</dbReference>
<dbReference type="PDB" id="1H97">
    <property type="method" value="X-ray"/>
    <property type="resolution" value="1.17 A"/>
    <property type="chains" value="A/B=2-148"/>
</dbReference>
<dbReference type="PDB" id="1KFR">
    <property type="method" value="X-ray"/>
    <property type="resolution" value="1.85 A"/>
    <property type="chains" value="A=2-148"/>
</dbReference>
<dbReference type="PDBsum" id="1H97"/>
<dbReference type="PDBsum" id="1KFR"/>
<dbReference type="SMR" id="P80721"/>
<dbReference type="EvolutionaryTrace" id="P80721"/>
<dbReference type="GO" id="GO:0020037">
    <property type="term" value="F:heme binding"/>
    <property type="evidence" value="ECO:0007669"/>
    <property type="project" value="InterPro"/>
</dbReference>
<dbReference type="GO" id="GO:0005506">
    <property type="term" value="F:iron ion binding"/>
    <property type="evidence" value="ECO:0007669"/>
    <property type="project" value="InterPro"/>
</dbReference>
<dbReference type="GO" id="GO:0019825">
    <property type="term" value="F:oxygen binding"/>
    <property type="evidence" value="ECO:0007669"/>
    <property type="project" value="InterPro"/>
</dbReference>
<dbReference type="GO" id="GO:0005344">
    <property type="term" value="F:oxygen carrier activity"/>
    <property type="evidence" value="ECO:0007669"/>
    <property type="project" value="UniProtKB-KW"/>
</dbReference>
<dbReference type="CDD" id="cd01040">
    <property type="entry name" value="Mb-like"/>
    <property type="match status" value="1"/>
</dbReference>
<dbReference type="Gene3D" id="1.10.490.10">
    <property type="entry name" value="Globins"/>
    <property type="match status" value="1"/>
</dbReference>
<dbReference type="InterPro" id="IPR000971">
    <property type="entry name" value="Globin"/>
</dbReference>
<dbReference type="InterPro" id="IPR009050">
    <property type="entry name" value="Globin-like_sf"/>
</dbReference>
<dbReference type="InterPro" id="IPR012292">
    <property type="entry name" value="Globin/Proto"/>
</dbReference>
<dbReference type="InterPro" id="IPR011406">
    <property type="entry name" value="Globin_trematode"/>
</dbReference>
<dbReference type="InterPro" id="IPR044399">
    <property type="entry name" value="Mb-like_M"/>
</dbReference>
<dbReference type="Pfam" id="PF00042">
    <property type="entry name" value="Globin"/>
    <property type="match status" value="1"/>
</dbReference>
<dbReference type="PIRSF" id="PIRSF036488">
    <property type="entry name" value="Myoglobin_tremt"/>
    <property type="match status" value="1"/>
</dbReference>
<dbReference type="SUPFAM" id="SSF46458">
    <property type="entry name" value="Globin-like"/>
    <property type="match status" value="1"/>
</dbReference>
<dbReference type="PROSITE" id="PS01033">
    <property type="entry name" value="GLOBIN"/>
    <property type="match status" value="1"/>
</dbReference>
<proteinExistence type="evidence at protein level"/>
<organism>
    <name type="scientific">Paramphistomum epiclitum</name>
    <dbReference type="NCBI Taxonomy" id="54403"/>
    <lineage>
        <taxon>Eukaryota</taxon>
        <taxon>Metazoa</taxon>
        <taxon>Spiralia</taxon>
        <taxon>Lophotrochozoa</taxon>
        <taxon>Platyhelminthes</taxon>
        <taxon>Trematoda</taxon>
        <taxon>Digenea</taxon>
        <taxon>Plagiorchiida</taxon>
        <taxon>Pronocephalata</taxon>
        <taxon>Paramphistomoidea</taxon>
        <taxon>Paramphistomidae</taxon>
        <taxon>Paramphistomum</taxon>
    </lineage>
</organism>
<keyword id="KW-0002">3D-structure</keyword>
<keyword id="KW-0903">Direct protein sequencing</keyword>
<keyword id="KW-0349">Heme</keyword>
<keyword id="KW-0408">Iron</keyword>
<keyword id="KW-0479">Metal-binding</keyword>
<keyword id="KW-0561">Oxygen transport</keyword>
<keyword id="KW-0813">Transport</keyword>
<protein>
    <recommendedName>
        <fullName>Globin-3</fullName>
    </recommendedName>
    <alternativeName>
        <fullName>Myoglobin</fullName>
    </alternativeName>
</protein>
<evidence type="ECO:0000250" key="1"/>
<evidence type="ECO:0000255" key="2">
    <source>
        <dbReference type="PROSITE-ProRule" id="PRU00238"/>
    </source>
</evidence>
<evidence type="ECO:0000269" key="3">
    <source>
    </source>
</evidence>
<evidence type="ECO:0000269" key="4">
    <source>
    </source>
</evidence>
<evidence type="ECO:0000305" key="5"/>
<evidence type="ECO:0007829" key="6">
    <source>
        <dbReference type="PDB" id="1H97"/>
    </source>
</evidence>
<evidence type="ECO:0007829" key="7">
    <source>
        <dbReference type="PDB" id="1KFR"/>
    </source>
</evidence>
<accession>P80721</accession>
<sequence length="148" mass="16770">MTLTKHEQDILLKELGPHVDTPAHIVETGLGAYHALFTAHPQYIIHFSRLEGHTIENVMQSEGIKHYARTLTEAIVHMLKEISNDAEVKKIAAQYGKDHTSRKVTKDEFMSGEPIFTKYFQNLVKDAEGKAAVEKFLKHVFPMMAAEI</sequence>
<comment type="function">
    <text>Oxygen binding protein.</text>
</comment>
<comment type="subunit">
    <text evidence="3">Monomer.</text>
</comment>
<comment type="mass spectrometry" mass="16643.2" error="1.58" method="Electrospray" evidence="4"/>
<comment type="miscellaneous">
    <text>This globin lacks one of the heme-binding histidine residues found in most other globins (replaced by a tyrosine) but has an extreme oxygen-avidity and high oxidation resistance despite this change.</text>
</comment>
<comment type="similarity">
    <text evidence="5">Belongs to the globin family.</text>
</comment>
<feature type="initiator methionine" description="Removed" evidence="1">
    <location>
        <position position="1"/>
    </location>
</feature>
<feature type="chain" id="PRO_0000052466" description="Globin-3">
    <location>
        <begin position="2"/>
        <end position="148"/>
    </location>
</feature>
<feature type="domain" description="Globin" evidence="2">
    <location>
        <begin position="2"/>
        <end position="148"/>
    </location>
</feature>
<feature type="binding site" description="proximal binding residue">
    <location>
        <position position="99"/>
    </location>
    <ligand>
        <name>heme</name>
        <dbReference type="ChEBI" id="CHEBI:30413"/>
    </ligand>
    <ligandPart>
        <name>Fe</name>
        <dbReference type="ChEBI" id="CHEBI:18248"/>
    </ligandPart>
</feature>
<feature type="helix" evidence="6">
    <location>
        <begin position="5"/>
        <end position="15"/>
    </location>
</feature>
<feature type="helix" evidence="6">
    <location>
        <begin position="16"/>
        <end position="18"/>
    </location>
</feature>
<feature type="strand" evidence="7">
    <location>
        <begin position="19"/>
        <end position="21"/>
    </location>
</feature>
<feature type="helix" evidence="6">
    <location>
        <begin position="22"/>
        <end position="39"/>
    </location>
</feature>
<feature type="helix" evidence="6">
    <location>
        <begin position="41"/>
        <end position="46"/>
    </location>
</feature>
<feature type="helix" evidence="6">
    <location>
        <begin position="48"/>
        <end position="50"/>
    </location>
</feature>
<feature type="turn" evidence="6">
    <location>
        <begin position="55"/>
        <end position="57"/>
    </location>
</feature>
<feature type="helix" evidence="6">
    <location>
        <begin position="58"/>
        <end position="60"/>
    </location>
</feature>
<feature type="helix" evidence="6">
    <location>
        <begin position="62"/>
        <end position="79"/>
    </location>
</feature>
<feature type="turn" evidence="6">
    <location>
        <begin position="80"/>
        <end position="83"/>
    </location>
</feature>
<feature type="helix" evidence="6">
    <location>
        <begin position="85"/>
        <end position="97"/>
    </location>
</feature>
<feature type="turn" evidence="6">
    <location>
        <begin position="98"/>
        <end position="101"/>
    </location>
</feature>
<feature type="helix" evidence="6">
    <location>
        <begin position="106"/>
        <end position="123"/>
    </location>
</feature>
<feature type="strand" evidence="6">
    <location>
        <begin position="124"/>
        <end position="126"/>
    </location>
</feature>
<feature type="helix" evidence="6">
    <location>
        <begin position="127"/>
        <end position="145"/>
    </location>
</feature>
<name>GLB_PAREP</name>